<keyword id="KW-0687">Ribonucleoprotein</keyword>
<keyword id="KW-0689">Ribosomal protein</keyword>
<keyword id="KW-0694">RNA-binding</keyword>
<keyword id="KW-0699">rRNA-binding</keyword>
<keyword id="KW-0820">tRNA-binding</keyword>
<proteinExistence type="inferred from homology"/>
<protein>
    <recommendedName>
        <fullName evidence="1">Large ribosomal subunit protein uL16</fullName>
    </recommendedName>
    <alternativeName>
        <fullName evidence="2">50S ribosomal protein L16</fullName>
    </alternativeName>
</protein>
<feature type="chain" id="PRO_1000143022" description="Large ribosomal subunit protein uL16">
    <location>
        <begin position="1"/>
        <end position="136"/>
    </location>
</feature>
<reference key="1">
    <citation type="journal article" date="2008" name="Genome Res.">
        <title>Comparative genome analysis of Salmonella enteritidis PT4 and Salmonella gallinarum 287/91 provides insights into evolutionary and host adaptation pathways.</title>
        <authorList>
            <person name="Thomson N.R."/>
            <person name="Clayton D.J."/>
            <person name="Windhorst D."/>
            <person name="Vernikos G."/>
            <person name="Davidson S."/>
            <person name="Churcher C."/>
            <person name="Quail M.A."/>
            <person name="Stevens M."/>
            <person name="Jones M.A."/>
            <person name="Watson M."/>
            <person name="Barron A."/>
            <person name="Layton A."/>
            <person name="Pickard D."/>
            <person name="Kingsley R.A."/>
            <person name="Bignell A."/>
            <person name="Clark L."/>
            <person name="Harris B."/>
            <person name="Ormond D."/>
            <person name="Abdellah Z."/>
            <person name="Brooks K."/>
            <person name="Cherevach I."/>
            <person name="Chillingworth T."/>
            <person name="Woodward J."/>
            <person name="Norberczak H."/>
            <person name="Lord A."/>
            <person name="Arrowsmith C."/>
            <person name="Jagels K."/>
            <person name="Moule S."/>
            <person name="Mungall K."/>
            <person name="Saunders M."/>
            <person name="Whitehead S."/>
            <person name="Chabalgoity J.A."/>
            <person name="Maskell D."/>
            <person name="Humphreys T."/>
            <person name="Roberts M."/>
            <person name="Barrow P.A."/>
            <person name="Dougan G."/>
            <person name="Parkhill J."/>
        </authorList>
    </citation>
    <scope>NUCLEOTIDE SEQUENCE [LARGE SCALE GENOMIC DNA]</scope>
    <source>
        <strain>P125109</strain>
    </source>
</reference>
<organism>
    <name type="scientific">Salmonella enteritidis PT4 (strain P125109)</name>
    <dbReference type="NCBI Taxonomy" id="550537"/>
    <lineage>
        <taxon>Bacteria</taxon>
        <taxon>Pseudomonadati</taxon>
        <taxon>Pseudomonadota</taxon>
        <taxon>Gammaproteobacteria</taxon>
        <taxon>Enterobacterales</taxon>
        <taxon>Enterobacteriaceae</taxon>
        <taxon>Salmonella</taxon>
    </lineage>
</organism>
<accession>B5R284</accession>
<comment type="function">
    <text evidence="1">Binds 23S rRNA and is also seen to make contacts with the A and possibly P site tRNAs.</text>
</comment>
<comment type="subunit">
    <text evidence="1">Part of the 50S ribosomal subunit.</text>
</comment>
<comment type="similarity">
    <text evidence="1">Belongs to the universal ribosomal protein uL16 family.</text>
</comment>
<gene>
    <name evidence="1" type="primary">rplP</name>
    <name type="ordered locus">SEN3261</name>
</gene>
<sequence length="136" mass="15194">MLQPKRTKFRKMHKGRNRGLAAGADVSFGSFGLKAVGRGRLTARQIEAARRAMTRAVKRQGKIWIRVFPDKPITEKPLAVRMGKGKGNVEYWVALIQPGKVLYEMDGVPEELAREAFKLAAAKLPIKTTFVTKTVM</sequence>
<evidence type="ECO:0000255" key="1">
    <source>
        <dbReference type="HAMAP-Rule" id="MF_01342"/>
    </source>
</evidence>
<evidence type="ECO:0000305" key="2"/>
<dbReference type="EMBL" id="AM933172">
    <property type="protein sequence ID" value="CAR34836.1"/>
    <property type="molecule type" value="Genomic_DNA"/>
</dbReference>
<dbReference type="RefSeq" id="WP_000941208.1">
    <property type="nucleotide sequence ID" value="NC_011294.1"/>
</dbReference>
<dbReference type="SMR" id="B5R284"/>
<dbReference type="GeneID" id="93035738"/>
<dbReference type="KEGG" id="set:SEN3261"/>
<dbReference type="HOGENOM" id="CLU_078858_2_1_6"/>
<dbReference type="Proteomes" id="UP000000613">
    <property type="component" value="Chromosome"/>
</dbReference>
<dbReference type="GO" id="GO:0022625">
    <property type="term" value="C:cytosolic large ribosomal subunit"/>
    <property type="evidence" value="ECO:0007669"/>
    <property type="project" value="TreeGrafter"/>
</dbReference>
<dbReference type="GO" id="GO:0019843">
    <property type="term" value="F:rRNA binding"/>
    <property type="evidence" value="ECO:0007669"/>
    <property type="project" value="UniProtKB-UniRule"/>
</dbReference>
<dbReference type="GO" id="GO:0003735">
    <property type="term" value="F:structural constituent of ribosome"/>
    <property type="evidence" value="ECO:0007669"/>
    <property type="project" value="InterPro"/>
</dbReference>
<dbReference type="GO" id="GO:0000049">
    <property type="term" value="F:tRNA binding"/>
    <property type="evidence" value="ECO:0007669"/>
    <property type="project" value="UniProtKB-KW"/>
</dbReference>
<dbReference type="GO" id="GO:0006412">
    <property type="term" value="P:translation"/>
    <property type="evidence" value="ECO:0007669"/>
    <property type="project" value="UniProtKB-UniRule"/>
</dbReference>
<dbReference type="CDD" id="cd01433">
    <property type="entry name" value="Ribosomal_L16_L10e"/>
    <property type="match status" value="1"/>
</dbReference>
<dbReference type="FunFam" id="3.90.1170.10:FF:000001">
    <property type="entry name" value="50S ribosomal protein L16"/>
    <property type="match status" value="1"/>
</dbReference>
<dbReference type="Gene3D" id="3.90.1170.10">
    <property type="entry name" value="Ribosomal protein L10e/L16"/>
    <property type="match status" value="1"/>
</dbReference>
<dbReference type="HAMAP" id="MF_01342">
    <property type="entry name" value="Ribosomal_uL16"/>
    <property type="match status" value="1"/>
</dbReference>
<dbReference type="InterPro" id="IPR047873">
    <property type="entry name" value="Ribosomal_uL16"/>
</dbReference>
<dbReference type="InterPro" id="IPR000114">
    <property type="entry name" value="Ribosomal_uL16_bact-type"/>
</dbReference>
<dbReference type="InterPro" id="IPR020798">
    <property type="entry name" value="Ribosomal_uL16_CS"/>
</dbReference>
<dbReference type="InterPro" id="IPR016180">
    <property type="entry name" value="Ribosomal_uL16_dom"/>
</dbReference>
<dbReference type="InterPro" id="IPR036920">
    <property type="entry name" value="Ribosomal_uL16_sf"/>
</dbReference>
<dbReference type="NCBIfam" id="TIGR01164">
    <property type="entry name" value="rplP_bact"/>
    <property type="match status" value="1"/>
</dbReference>
<dbReference type="PANTHER" id="PTHR12220">
    <property type="entry name" value="50S/60S RIBOSOMAL PROTEIN L16"/>
    <property type="match status" value="1"/>
</dbReference>
<dbReference type="PANTHER" id="PTHR12220:SF13">
    <property type="entry name" value="LARGE RIBOSOMAL SUBUNIT PROTEIN UL16M"/>
    <property type="match status" value="1"/>
</dbReference>
<dbReference type="Pfam" id="PF00252">
    <property type="entry name" value="Ribosomal_L16"/>
    <property type="match status" value="1"/>
</dbReference>
<dbReference type="PRINTS" id="PR00060">
    <property type="entry name" value="RIBOSOMALL16"/>
</dbReference>
<dbReference type="SUPFAM" id="SSF54686">
    <property type="entry name" value="Ribosomal protein L16p/L10e"/>
    <property type="match status" value="1"/>
</dbReference>
<dbReference type="PROSITE" id="PS00586">
    <property type="entry name" value="RIBOSOMAL_L16_1"/>
    <property type="match status" value="1"/>
</dbReference>
<dbReference type="PROSITE" id="PS00701">
    <property type="entry name" value="RIBOSOMAL_L16_2"/>
    <property type="match status" value="1"/>
</dbReference>
<name>RL16_SALEP</name>